<accession>P69914</accession>
<accession>P31803</accession>
<gene>
    <name evidence="1" type="primary">csrA</name>
    <name type="synonym">zfiA</name>
    <name type="ordered locus">c3249</name>
</gene>
<sequence length="61" mass="6856">MLILTRRVGETLMIGDEVTVTVLGVKGNQVRIGVNAPKEVSVHREEIYQRIQAEKSQQSSY</sequence>
<protein>
    <recommendedName>
        <fullName evidence="1">Translational regulator CsrA</fullName>
    </recommendedName>
    <alternativeName>
        <fullName evidence="1">Carbon storage regulator</fullName>
    </alternativeName>
</protein>
<reference key="1">
    <citation type="journal article" date="2002" name="Proc. Natl. Acad. Sci. U.S.A.">
        <title>Extensive mosaic structure revealed by the complete genome sequence of uropathogenic Escherichia coli.</title>
        <authorList>
            <person name="Welch R.A."/>
            <person name="Burland V."/>
            <person name="Plunkett G. III"/>
            <person name="Redford P."/>
            <person name="Roesch P."/>
            <person name="Rasko D."/>
            <person name="Buckles E.L."/>
            <person name="Liou S.-R."/>
            <person name="Boutin A."/>
            <person name="Hackett J."/>
            <person name="Stroud D."/>
            <person name="Mayhew G.F."/>
            <person name="Rose D.J."/>
            <person name="Zhou S."/>
            <person name="Schwartz D.C."/>
            <person name="Perna N.T."/>
            <person name="Mobley H.L.T."/>
            <person name="Donnenberg M.S."/>
            <person name="Blattner F.R."/>
        </authorList>
    </citation>
    <scope>NUCLEOTIDE SEQUENCE [LARGE SCALE GENOMIC DNA]</scope>
    <source>
        <strain>CFT073 / ATCC 700928 / UPEC</strain>
    </source>
</reference>
<name>CSRA_ECOL6</name>
<organism>
    <name type="scientific">Escherichia coli O6:H1 (strain CFT073 / ATCC 700928 / UPEC)</name>
    <dbReference type="NCBI Taxonomy" id="199310"/>
    <lineage>
        <taxon>Bacteria</taxon>
        <taxon>Pseudomonadati</taxon>
        <taxon>Pseudomonadota</taxon>
        <taxon>Gammaproteobacteria</taxon>
        <taxon>Enterobacterales</taxon>
        <taxon>Enterobacteriaceae</taxon>
        <taxon>Escherichia</taxon>
    </lineage>
</organism>
<keyword id="KW-0010">Activator</keyword>
<keyword id="KW-0963">Cytoplasm</keyword>
<keyword id="KW-1185">Reference proteome</keyword>
<keyword id="KW-0678">Repressor</keyword>
<keyword id="KW-0694">RNA-binding</keyword>
<keyword id="KW-0810">Translation regulation</keyword>
<comment type="function">
    <text evidence="1">A key translational regulator that binds mRNA to regulate translation initiation and/or mRNA stability. Mediates global changes in gene expression, shifting from rapid growth to stress survival by linking envelope stress, the stringent response and the catabolite repression systems. Usually binds in the 5'-UTR; binding at or near the Shine-Dalgarno sequence prevents ribosome-binding, repressing translation, binding elsewhere in the 5'-UTR can activate translation and/or stabilize the mRNA. Its function is antagonized by small RNA(s).</text>
</comment>
<comment type="subunit">
    <text evidence="1">Homodimer; the beta-strands of each monomer intercalate to form a hydrophobic core, while the alpha-helices form wings that extend away from the core.</text>
</comment>
<comment type="subcellular location">
    <subcellularLocation>
        <location evidence="1">Cytoplasm</location>
    </subcellularLocation>
</comment>
<comment type="similarity">
    <text evidence="1">Belongs to the CsrA/RsmA family.</text>
</comment>
<evidence type="ECO:0000255" key="1">
    <source>
        <dbReference type="HAMAP-Rule" id="MF_00167"/>
    </source>
</evidence>
<dbReference type="EMBL" id="AE014075">
    <property type="protein sequence ID" value="AAN81701.1"/>
    <property type="molecule type" value="Genomic_DNA"/>
</dbReference>
<dbReference type="RefSeq" id="WP_000906486.1">
    <property type="nucleotide sequence ID" value="NZ_CP051263.1"/>
</dbReference>
<dbReference type="SMR" id="P69914"/>
<dbReference type="STRING" id="199310.c3249"/>
<dbReference type="GeneID" id="98389839"/>
<dbReference type="KEGG" id="ecc:c3249"/>
<dbReference type="eggNOG" id="COG1551">
    <property type="taxonomic scope" value="Bacteria"/>
</dbReference>
<dbReference type="HOGENOM" id="CLU_164837_2_1_6"/>
<dbReference type="BioCyc" id="ECOL199310:C3249-MONOMER"/>
<dbReference type="Proteomes" id="UP000001410">
    <property type="component" value="Chromosome"/>
</dbReference>
<dbReference type="GO" id="GO:0005829">
    <property type="term" value="C:cytosol"/>
    <property type="evidence" value="ECO:0007669"/>
    <property type="project" value="TreeGrafter"/>
</dbReference>
<dbReference type="GO" id="GO:0048027">
    <property type="term" value="F:mRNA 5'-UTR binding"/>
    <property type="evidence" value="ECO:0007669"/>
    <property type="project" value="UniProtKB-UniRule"/>
</dbReference>
<dbReference type="GO" id="GO:0006402">
    <property type="term" value="P:mRNA catabolic process"/>
    <property type="evidence" value="ECO:0007669"/>
    <property type="project" value="InterPro"/>
</dbReference>
<dbReference type="GO" id="GO:0045947">
    <property type="term" value="P:negative regulation of translational initiation"/>
    <property type="evidence" value="ECO:0007669"/>
    <property type="project" value="UniProtKB-UniRule"/>
</dbReference>
<dbReference type="GO" id="GO:0045948">
    <property type="term" value="P:positive regulation of translational initiation"/>
    <property type="evidence" value="ECO:0007669"/>
    <property type="project" value="UniProtKB-UniRule"/>
</dbReference>
<dbReference type="GO" id="GO:0006109">
    <property type="term" value="P:regulation of carbohydrate metabolic process"/>
    <property type="evidence" value="ECO:0007669"/>
    <property type="project" value="UniProtKB-UniRule"/>
</dbReference>
<dbReference type="FunFam" id="2.60.40.4380:FF:000001">
    <property type="entry name" value="Translational regulator CsrA"/>
    <property type="match status" value="1"/>
</dbReference>
<dbReference type="Gene3D" id="2.60.40.4380">
    <property type="entry name" value="Translational regulator CsrA"/>
    <property type="match status" value="1"/>
</dbReference>
<dbReference type="HAMAP" id="MF_00167">
    <property type="entry name" value="CsrA"/>
    <property type="match status" value="1"/>
</dbReference>
<dbReference type="InterPro" id="IPR003751">
    <property type="entry name" value="CsrA"/>
</dbReference>
<dbReference type="InterPro" id="IPR036107">
    <property type="entry name" value="CsrA_sf"/>
</dbReference>
<dbReference type="NCBIfam" id="TIGR00202">
    <property type="entry name" value="csrA"/>
    <property type="match status" value="1"/>
</dbReference>
<dbReference type="NCBIfam" id="NF002469">
    <property type="entry name" value="PRK01712.1"/>
    <property type="match status" value="1"/>
</dbReference>
<dbReference type="PANTHER" id="PTHR34984">
    <property type="entry name" value="CARBON STORAGE REGULATOR"/>
    <property type="match status" value="1"/>
</dbReference>
<dbReference type="PANTHER" id="PTHR34984:SF1">
    <property type="entry name" value="CARBON STORAGE REGULATOR"/>
    <property type="match status" value="1"/>
</dbReference>
<dbReference type="Pfam" id="PF02599">
    <property type="entry name" value="CsrA"/>
    <property type="match status" value="1"/>
</dbReference>
<dbReference type="SUPFAM" id="SSF117130">
    <property type="entry name" value="CsrA-like"/>
    <property type="match status" value="1"/>
</dbReference>
<proteinExistence type="inferred from homology"/>
<feature type="chain" id="PRO_0000177062" description="Translational regulator CsrA">
    <location>
        <begin position="1"/>
        <end position="61"/>
    </location>
</feature>